<proteinExistence type="inferred from homology"/>
<dbReference type="EMBL" id="AE000513">
    <property type="protein sequence ID" value="AAF11658.1"/>
    <property type="status" value="ALT_INIT"/>
    <property type="molecule type" value="Genomic_DNA"/>
</dbReference>
<dbReference type="PIR" id="H75313">
    <property type="entry name" value="H75313"/>
</dbReference>
<dbReference type="RefSeq" id="NP_295832.1">
    <property type="nucleotide sequence ID" value="NC_001263.1"/>
</dbReference>
<dbReference type="RefSeq" id="WP_027479943.1">
    <property type="nucleotide sequence ID" value="NC_001263.1"/>
</dbReference>
<dbReference type="SMR" id="Q9RSL5"/>
<dbReference type="FunCoup" id="Q9RSL5">
    <property type="interactions" value="306"/>
</dbReference>
<dbReference type="STRING" id="243230.DR_2109"/>
<dbReference type="PaxDb" id="243230-DR_2109"/>
<dbReference type="EnsemblBacteria" id="AAF11658">
    <property type="protein sequence ID" value="AAF11658"/>
    <property type="gene ID" value="DR_2109"/>
</dbReference>
<dbReference type="GeneID" id="69518351"/>
<dbReference type="KEGG" id="dra:DR_2109"/>
<dbReference type="PATRIC" id="fig|243230.17.peg.2332"/>
<dbReference type="eggNOG" id="COG0199">
    <property type="taxonomic scope" value="Bacteria"/>
</dbReference>
<dbReference type="HOGENOM" id="CLU_139869_0_0_0"/>
<dbReference type="InParanoid" id="Q9RSL5"/>
<dbReference type="OrthoDB" id="9810484at2"/>
<dbReference type="Proteomes" id="UP000002524">
    <property type="component" value="Chromosome 1"/>
</dbReference>
<dbReference type="GO" id="GO:0005737">
    <property type="term" value="C:cytoplasm"/>
    <property type="evidence" value="ECO:0007669"/>
    <property type="project" value="UniProtKB-ARBA"/>
</dbReference>
<dbReference type="GO" id="GO:0015935">
    <property type="term" value="C:small ribosomal subunit"/>
    <property type="evidence" value="ECO:0000318"/>
    <property type="project" value="GO_Central"/>
</dbReference>
<dbReference type="GO" id="GO:0019843">
    <property type="term" value="F:rRNA binding"/>
    <property type="evidence" value="ECO:0007669"/>
    <property type="project" value="UniProtKB-UniRule"/>
</dbReference>
<dbReference type="GO" id="GO:0003735">
    <property type="term" value="F:structural constituent of ribosome"/>
    <property type="evidence" value="ECO:0000318"/>
    <property type="project" value="GO_Central"/>
</dbReference>
<dbReference type="GO" id="GO:0006412">
    <property type="term" value="P:translation"/>
    <property type="evidence" value="ECO:0000318"/>
    <property type="project" value="GO_Central"/>
</dbReference>
<dbReference type="Gene3D" id="4.10.830.10">
    <property type="entry name" value="30s Ribosomal Protein S14, Chain N"/>
    <property type="match status" value="1"/>
</dbReference>
<dbReference type="HAMAP" id="MF_00537">
    <property type="entry name" value="Ribosomal_uS14_1"/>
    <property type="match status" value="1"/>
</dbReference>
<dbReference type="InterPro" id="IPR001209">
    <property type="entry name" value="Ribosomal_uS14"/>
</dbReference>
<dbReference type="InterPro" id="IPR023036">
    <property type="entry name" value="Ribosomal_uS14_bac/plastid"/>
</dbReference>
<dbReference type="InterPro" id="IPR018271">
    <property type="entry name" value="Ribosomal_uS14_CS"/>
</dbReference>
<dbReference type="InterPro" id="IPR043140">
    <property type="entry name" value="Ribosomal_uS14_sf"/>
</dbReference>
<dbReference type="NCBIfam" id="NF006477">
    <property type="entry name" value="PRK08881.1"/>
    <property type="match status" value="1"/>
</dbReference>
<dbReference type="PANTHER" id="PTHR19836">
    <property type="entry name" value="30S RIBOSOMAL PROTEIN S14"/>
    <property type="match status" value="1"/>
</dbReference>
<dbReference type="PANTHER" id="PTHR19836:SF19">
    <property type="entry name" value="SMALL RIBOSOMAL SUBUNIT PROTEIN US14M"/>
    <property type="match status" value="1"/>
</dbReference>
<dbReference type="Pfam" id="PF00253">
    <property type="entry name" value="Ribosomal_S14"/>
    <property type="match status" value="1"/>
</dbReference>
<dbReference type="SUPFAM" id="SSF57716">
    <property type="entry name" value="Glucocorticoid receptor-like (DNA-binding domain)"/>
    <property type="match status" value="1"/>
</dbReference>
<dbReference type="PROSITE" id="PS00527">
    <property type="entry name" value="RIBOSOMAL_S14"/>
    <property type="match status" value="1"/>
</dbReference>
<sequence length="89" mass="10208">MANKSKLAKQKQREKTVEKYAAKRAELKAAGDYYGLTQLPRDASPTRLHNRCEFTGRPRGYVRFFGVSRIVLREMAHRGELPGVKKASW</sequence>
<organism>
    <name type="scientific">Deinococcus radiodurans (strain ATCC 13939 / DSM 20539 / JCM 16871 / CCUG 27074 / LMG 4051 / NBRC 15346 / NCIMB 9279 / VKM B-1422 / R1)</name>
    <dbReference type="NCBI Taxonomy" id="243230"/>
    <lineage>
        <taxon>Bacteria</taxon>
        <taxon>Thermotogati</taxon>
        <taxon>Deinococcota</taxon>
        <taxon>Deinococci</taxon>
        <taxon>Deinococcales</taxon>
        <taxon>Deinococcaceae</taxon>
        <taxon>Deinococcus</taxon>
    </lineage>
</organism>
<reference key="1">
    <citation type="journal article" date="1999" name="Science">
        <title>Genome sequence of the radioresistant bacterium Deinococcus radiodurans R1.</title>
        <authorList>
            <person name="White O."/>
            <person name="Eisen J.A."/>
            <person name="Heidelberg J.F."/>
            <person name="Hickey E.K."/>
            <person name="Peterson J.D."/>
            <person name="Dodson R.J."/>
            <person name="Haft D.H."/>
            <person name="Gwinn M.L."/>
            <person name="Nelson W.C."/>
            <person name="Richardson D.L."/>
            <person name="Moffat K.S."/>
            <person name="Qin H."/>
            <person name="Jiang L."/>
            <person name="Pamphile W."/>
            <person name="Crosby M."/>
            <person name="Shen M."/>
            <person name="Vamathevan J.J."/>
            <person name="Lam P."/>
            <person name="McDonald L.A."/>
            <person name="Utterback T.R."/>
            <person name="Zalewski C."/>
            <person name="Makarova K.S."/>
            <person name="Aravind L."/>
            <person name="Daly M.J."/>
            <person name="Minton K.W."/>
            <person name="Fleischmann R.D."/>
            <person name="Ketchum K.A."/>
            <person name="Nelson K.E."/>
            <person name="Salzberg S.L."/>
            <person name="Smith H.O."/>
            <person name="Venter J.C."/>
            <person name="Fraser C.M."/>
        </authorList>
    </citation>
    <scope>NUCLEOTIDE SEQUENCE [LARGE SCALE GENOMIC DNA]</scope>
    <source>
        <strain>ATCC 13939 / DSM 20539 / JCM 16871 / CCUG 27074 / LMG 4051 / NBRC 15346 / NCIMB 9279 / VKM B-1422 / R1</strain>
    </source>
</reference>
<keyword id="KW-1185">Reference proteome</keyword>
<keyword id="KW-0687">Ribonucleoprotein</keyword>
<keyword id="KW-0689">Ribosomal protein</keyword>
<keyword id="KW-0694">RNA-binding</keyword>
<keyword id="KW-0699">rRNA-binding</keyword>
<accession>Q9RSL5</accession>
<gene>
    <name evidence="1" type="primary">rpsN</name>
    <name type="ordered locus">DR_2109</name>
</gene>
<feature type="chain" id="PRO_0000130889" description="Small ribosomal subunit protein uS14">
    <location>
        <begin position="1"/>
        <end position="89"/>
    </location>
</feature>
<name>RS14_DEIRA</name>
<comment type="function">
    <text evidence="1">Binds 16S rRNA, required for the assembly of 30S particles and may also be responsible for determining the conformation of the 16S rRNA at the A site.</text>
</comment>
<comment type="subunit">
    <text evidence="1">Part of the 30S ribosomal subunit. Contacts proteins S3 and S10.</text>
</comment>
<comment type="similarity">
    <text evidence="1">Belongs to the universal ribosomal protein uS14 family.</text>
</comment>
<comment type="sequence caution" evidence="2">
    <conflict type="erroneous initiation">
        <sequence resource="EMBL-CDS" id="AAF11658"/>
    </conflict>
</comment>
<evidence type="ECO:0000255" key="1">
    <source>
        <dbReference type="HAMAP-Rule" id="MF_00537"/>
    </source>
</evidence>
<evidence type="ECO:0000305" key="2"/>
<protein>
    <recommendedName>
        <fullName evidence="1">Small ribosomal subunit protein uS14</fullName>
    </recommendedName>
    <alternativeName>
        <fullName evidence="2">30S ribosomal protein S14</fullName>
    </alternativeName>
</protein>